<name>Y1299_MYCBO</name>
<accession>P64792</accession>
<accession>A0A1R3XZZ6</accession>
<accession>Q11051</accession>
<accession>X2BHH1</accession>
<sequence>MTTSKIATAFKTATFALAAGAVALGLASPADAAAGTMYGDPAAAAKYWRQQTYDDCVLMSAADVIGQVTGREPSERAIIKVAQSTPSVVHPGSIYTKPADAEHPNSGMGTSVADIPTLLAHYGVDAVITDEDHATATGVATGMAALEQYLGSGHAVIVSINAEMIWGQPVEETDSAGNPRSDHAVVVTGVDTENGIVHLNDSGTPTGRDEQIPMETFVEAWATSHDFMAVTT</sequence>
<evidence type="ECO:0000255" key="1"/>
<organism>
    <name type="scientific">Mycobacterium bovis (strain ATCC BAA-935 / AF2122/97)</name>
    <dbReference type="NCBI Taxonomy" id="233413"/>
    <lineage>
        <taxon>Bacteria</taxon>
        <taxon>Bacillati</taxon>
        <taxon>Actinomycetota</taxon>
        <taxon>Actinomycetes</taxon>
        <taxon>Mycobacteriales</taxon>
        <taxon>Mycobacteriaceae</taxon>
        <taxon>Mycobacterium</taxon>
        <taxon>Mycobacterium tuberculosis complex</taxon>
    </lineage>
</organism>
<keyword id="KW-1185">Reference proteome</keyword>
<keyword id="KW-0732">Signal</keyword>
<feature type="signal peptide" evidence="1">
    <location>
        <begin position="1"/>
        <end position="32"/>
    </location>
</feature>
<feature type="chain" id="PRO_0000014088" description="Uncharacterized protein Mb1299c">
    <location>
        <begin position="33"/>
        <end position="232"/>
    </location>
</feature>
<protein>
    <recommendedName>
        <fullName>Uncharacterized protein Mb1299c</fullName>
    </recommendedName>
</protein>
<proteinExistence type="inferred from homology"/>
<gene>
    <name type="ordered locus">BQ2027_MB1299C</name>
</gene>
<reference key="1">
    <citation type="journal article" date="2003" name="Proc. Natl. Acad. Sci. U.S.A.">
        <title>The complete genome sequence of Mycobacterium bovis.</title>
        <authorList>
            <person name="Garnier T."/>
            <person name="Eiglmeier K."/>
            <person name="Camus J.-C."/>
            <person name="Medina N."/>
            <person name="Mansoor H."/>
            <person name="Pryor M."/>
            <person name="Duthoy S."/>
            <person name="Grondin S."/>
            <person name="Lacroix C."/>
            <person name="Monsempe C."/>
            <person name="Simon S."/>
            <person name="Harris B."/>
            <person name="Atkin R."/>
            <person name="Doggett J."/>
            <person name="Mayes R."/>
            <person name="Keating L."/>
            <person name="Wheeler P.R."/>
            <person name="Parkhill J."/>
            <person name="Barrell B.G."/>
            <person name="Cole S.T."/>
            <person name="Gordon S.V."/>
            <person name="Hewinson R.G."/>
        </authorList>
    </citation>
    <scope>NUCLEOTIDE SEQUENCE [LARGE SCALE GENOMIC DNA]</scope>
    <source>
        <strain>ATCC BAA-935 / AF2122/97</strain>
    </source>
</reference>
<reference key="2">
    <citation type="journal article" date="2017" name="Genome Announc.">
        <title>Updated reference genome sequence and annotation of Mycobacterium bovis AF2122/97.</title>
        <authorList>
            <person name="Malone K.M."/>
            <person name="Farrell D."/>
            <person name="Stuber T.P."/>
            <person name="Schubert O.T."/>
            <person name="Aebersold R."/>
            <person name="Robbe-Austerman S."/>
            <person name="Gordon S.V."/>
        </authorList>
    </citation>
    <scope>NUCLEOTIDE SEQUENCE [LARGE SCALE GENOMIC DNA]</scope>
    <scope>GENOME REANNOTATION</scope>
    <source>
        <strain>ATCC BAA-935 / AF2122/97</strain>
    </source>
</reference>
<dbReference type="EMBL" id="LT708304">
    <property type="protein sequence ID" value="SIT99902.1"/>
    <property type="molecule type" value="Genomic_DNA"/>
</dbReference>
<dbReference type="RefSeq" id="NP_854953.1">
    <property type="nucleotide sequence ID" value="NC_002945.3"/>
</dbReference>
<dbReference type="RefSeq" id="WP_003898800.1">
    <property type="nucleotide sequence ID" value="NC_002945.4"/>
</dbReference>
<dbReference type="SMR" id="P64792"/>
<dbReference type="KEGG" id="mbo:BQ2027_MB1299C"/>
<dbReference type="PATRIC" id="fig|233413.5.peg.1424"/>
<dbReference type="Proteomes" id="UP000001419">
    <property type="component" value="Chromosome"/>
</dbReference>
<dbReference type="Gene3D" id="3.90.70.10">
    <property type="entry name" value="Cysteine proteinases"/>
    <property type="match status" value="1"/>
</dbReference>
<dbReference type="InterPro" id="IPR025660">
    <property type="entry name" value="Pept_his_AS"/>
</dbReference>
<dbReference type="InterPro" id="IPR039564">
    <property type="entry name" value="Peptidase_C39-like"/>
</dbReference>
<dbReference type="Pfam" id="PF13529">
    <property type="entry name" value="Peptidase_C39_2"/>
    <property type="match status" value="1"/>
</dbReference>